<gene>
    <name evidence="1" type="primary">rplO</name>
    <name type="ordered locus">RHOS4_03130</name>
    <name type="ORF">RSP_1734</name>
</gene>
<sequence length="161" mass="16708">MKLNELRDNEGAARKKKRVARGPGSGKGKTAGRGIKGQKSRSGVALNGYEGGQMPLYRRLPKRGFTKPNRKEYAVVNLGLIQKFVDAGKLDASQPIDENAIVAAGVTSHKRDGIRVLAKGEITAKLALTVSGASKSAVEAIEKAGGSITLTAPAAAAASAE</sequence>
<organism>
    <name type="scientific">Cereibacter sphaeroides (strain ATCC 17023 / DSM 158 / JCM 6121 / CCUG 31486 / LMG 2827 / NBRC 12203 / NCIMB 8253 / ATH 2.4.1.)</name>
    <name type="common">Rhodobacter sphaeroides</name>
    <dbReference type="NCBI Taxonomy" id="272943"/>
    <lineage>
        <taxon>Bacteria</taxon>
        <taxon>Pseudomonadati</taxon>
        <taxon>Pseudomonadota</taxon>
        <taxon>Alphaproteobacteria</taxon>
        <taxon>Rhodobacterales</taxon>
        <taxon>Paracoccaceae</taxon>
        <taxon>Cereibacter</taxon>
    </lineage>
</organism>
<feature type="chain" id="PRO_0000251548" description="Large ribosomal subunit protein uL15">
    <location>
        <begin position="1"/>
        <end position="161"/>
    </location>
</feature>
<feature type="region of interest" description="Disordered" evidence="2">
    <location>
        <begin position="1"/>
        <end position="51"/>
    </location>
</feature>
<feature type="compositionally biased region" description="Basic and acidic residues" evidence="2">
    <location>
        <begin position="1"/>
        <end position="13"/>
    </location>
</feature>
<feature type="compositionally biased region" description="Gly residues" evidence="2">
    <location>
        <begin position="23"/>
        <end position="35"/>
    </location>
</feature>
<proteinExistence type="inferred from homology"/>
<keyword id="KW-1185">Reference proteome</keyword>
<keyword id="KW-0687">Ribonucleoprotein</keyword>
<keyword id="KW-0689">Ribosomal protein</keyword>
<keyword id="KW-0694">RNA-binding</keyword>
<keyword id="KW-0699">rRNA-binding</keyword>
<name>RL15_CERS4</name>
<accession>Q3J5Q3</accession>
<protein>
    <recommendedName>
        <fullName evidence="1">Large ribosomal subunit protein uL15</fullName>
    </recommendedName>
    <alternativeName>
        <fullName evidence="3">50S ribosomal protein L15</fullName>
    </alternativeName>
</protein>
<comment type="function">
    <text evidence="1">Binds to the 23S rRNA.</text>
</comment>
<comment type="subunit">
    <text evidence="1">Part of the 50S ribosomal subunit.</text>
</comment>
<comment type="similarity">
    <text evidence="1">Belongs to the universal ribosomal protein uL15 family.</text>
</comment>
<evidence type="ECO:0000255" key="1">
    <source>
        <dbReference type="HAMAP-Rule" id="MF_01341"/>
    </source>
</evidence>
<evidence type="ECO:0000256" key="2">
    <source>
        <dbReference type="SAM" id="MobiDB-lite"/>
    </source>
</evidence>
<evidence type="ECO:0000305" key="3"/>
<reference key="1">
    <citation type="submission" date="2005-09" db="EMBL/GenBank/DDBJ databases">
        <title>Complete sequence of chromosome 1 of Rhodobacter sphaeroides 2.4.1.</title>
        <authorList>
            <person name="Copeland A."/>
            <person name="Lucas S."/>
            <person name="Lapidus A."/>
            <person name="Barry K."/>
            <person name="Detter J.C."/>
            <person name="Glavina T."/>
            <person name="Hammon N."/>
            <person name="Israni S."/>
            <person name="Pitluck S."/>
            <person name="Richardson P."/>
            <person name="Mackenzie C."/>
            <person name="Choudhary M."/>
            <person name="Larimer F."/>
            <person name="Hauser L.J."/>
            <person name="Land M."/>
            <person name="Donohue T.J."/>
            <person name="Kaplan S."/>
        </authorList>
    </citation>
    <scope>NUCLEOTIDE SEQUENCE [LARGE SCALE GENOMIC DNA]</scope>
    <source>
        <strain>ATCC 17023 / DSM 158 / JCM 6121 / CCUG 31486 / LMG 2827 / NBRC 12203 / NCIMB 8253 / ATH 2.4.1.</strain>
    </source>
</reference>
<dbReference type="EMBL" id="CP000143">
    <property type="protein sequence ID" value="ABA77881.1"/>
    <property type="molecule type" value="Genomic_DNA"/>
</dbReference>
<dbReference type="RefSeq" id="WP_009563657.1">
    <property type="nucleotide sequence ID" value="NZ_CP030271.1"/>
</dbReference>
<dbReference type="RefSeq" id="YP_351782.1">
    <property type="nucleotide sequence ID" value="NC_007493.2"/>
</dbReference>
<dbReference type="SMR" id="Q3J5Q3"/>
<dbReference type="STRING" id="272943.RSP_1734"/>
<dbReference type="EnsemblBacteria" id="ABA77881">
    <property type="protein sequence ID" value="ABA77881"/>
    <property type="gene ID" value="RSP_1734"/>
</dbReference>
<dbReference type="GeneID" id="67445519"/>
<dbReference type="KEGG" id="rsp:RSP_1734"/>
<dbReference type="PATRIC" id="fig|272943.9.peg.612"/>
<dbReference type="eggNOG" id="COG0200">
    <property type="taxonomic scope" value="Bacteria"/>
</dbReference>
<dbReference type="OrthoDB" id="9810293at2"/>
<dbReference type="PhylomeDB" id="Q3J5Q3"/>
<dbReference type="Proteomes" id="UP000002703">
    <property type="component" value="Chromosome 1"/>
</dbReference>
<dbReference type="GO" id="GO:0015934">
    <property type="term" value="C:large ribosomal subunit"/>
    <property type="evidence" value="ECO:0007669"/>
    <property type="project" value="InterPro"/>
</dbReference>
<dbReference type="GO" id="GO:0019843">
    <property type="term" value="F:rRNA binding"/>
    <property type="evidence" value="ECO:0007669"/>
    <property type="project" value="UniProtKB-UniRule"/>
</dbReference>
<dbReference type="GO" id="GO:0003735">
    <property type="term" value="F:structural constituent of ribosome"/>
    <property type="evidence" value="ECO:0007669"/>
    <property type="project" value="InterPro"/>
</dbReference>
<dbReference type="GO" id="GO:0006412">
    <property type="term" value="P:translation"/>
    <property type="evidence" value="ECO:0007669"/>
    <property type="project" value="UniProtKB-UniRule"/>
</dbReference>
<dbReference type="Gene3D" id="3.100.10.10">
    <property type="match status" value="1"/>
</dbReference>
<dbReference type="HAMAP" id="MF_01341">
    <property type="entry name" value="Ribosomal_uL15"/>
    <property type="match status" value="1"/>
</dbReference>
<dbReference type="InterPro" id="IPR030878">
    <property type="entry name" value="Ribosomal_uL15"/>
</dbReference>
<dbReference type="InterPro" id="IPR021131">
    <property type="entry name" value="Ribosomal_uL15/eL18"/>
</dbReference>
<dbReference type="InterPro" id="IPR036227">
    <property type="entry name" value="Ribosomal_uL15/eL18_sf"/>
</dbReference>
<dbReference type="InterPro" id="IPR005749">
    <property type="entry name" value="Ribosomal_uL15_bac-type"/>
</dbReference>
<dbReference type="InterPro" id="IPR001196">
    <property type="entry name" value="Ribosomal_uL15_CS"/>
</dbReference>
<dbReference type="NCBIfam" id="TIGR01071">
    <property type="entry name" value="rplO_bact"/>
    <property type="match status" value="1"/>
</dbReference>
<dbReference type="PANTHER" id="PTHR12934">
    <property type="entry name" value="50S RIBOSOMAL PROTEIN L15"/>
    <property type="match status" value="1"/>
</dbReference>
<dbReference type="PANTHER" id="PTHR12934:SF11">
    <property type="entry name" value="LARGE RIBOSOMAL SUBUNIT PROTEIN UL15M"/>
    <property type="match status" value="1"/>
</dbReference>
<dbReference type="Pfam" id="PF00828">
    <property type="entry name" value="Ribosomal_L27A"/>
    <property type="match status" value="1"/>
</dbReference>
<dbReference type="SUPFAM" id="SSF52080">
    <property type="entry name" value="Ribosomal proteins L15p and L18e"/>
    <property type="match status" value="1"/>
</dbReference>
<dbReference type="PROSITE" id="PS00475">
    <property type="entry name" value="RIBOSOMAL_L15"/>
    <property type="match status" value="1"/>
</dbReference>